<name>ARLY_SYNP6</name>
<keyword id="KW-0028">Amino-acid biosynthesis</keyword>
<keyword id="KW-0055">Arginine biosynthesis</keyword>
<keyword id="KW-0963">Cytoplasm</keyword>
<keyword id="KW-0456">Lyase</keyword>
<feature type="chain" id="PRO_0000137838" description="Argininosuccinate lyase">
    <location>
        <begin position="1"/>
        <end position="466"/>
    </location>
</feature>
<sequence length="466" mass="51822">MTQAAAPQPWSDRFETALHPAIVVFNASIGFDLALIEYDLTGSQAHAQMLAEQDIISREEGEAIVAGLEQIRSEYRTGQFQPGLDAEDVHFAVERRLTELLGDVGKKLHTARSRNDQVGTDTRLYLRDRVDHIRQQLRDYQRVLLSQAEQHLETLIPGYTHLQRAQPLSLAHHLHAYLEMAERDWERLGDLRKRLNTSPLGAGALAGTTFPIDRQRTAALLGFERIYANSLDAVSDRDSLVEFLAAASLIMVHLSRLAEEVILWASEEFRFVRLSDRCATGSSITPQKKNPDVPELVRGKTGRVFGHLQALLVVLKGLPLAYNKDLQEDKEGLFDAVQTVESCLEAMTILFAEGLSFQPDRLAAAVEADFSNATDVADYLAARGVPFREAYNLVGRVVRTCLEQGKLLKDLSLAEWQALHPQFEADIYTAIAPQQVVAARNSLGGTGFEQVRSALASVRQRLEATC</sequence>
<organism>
    <name type="scientific">Synechococcus sp. (strain ATCC 27144 / PCC 6301 / SAUG 1402/1)</name>
    <name type="common">Anacystis nidulans</name>
    <dbReference type="NCBI Taxonomy" id="269084"/>
    <lineage>
        <taxon>Bacteria</taxon>
        <taxon>Bacillati</taxon>
        <taxon>Cyanobacteriota</taxon>
        <taxon>Cyanophyceae</taxon>
        <taxon>Synechococcales</taxon>
        <taxon>Synechococcaceae</taxon>
        <taxon>Synechococcus</taxon>
    </lineage>
</organism>
<proteinExistence type="inferred from homology"/>
<dbReference type="EC" id="4.3.2.1" evidence="1"/>
<dbReference type="EMBL" id="AP008231">
    <property type="protein sequence ID" value="BAD79819.1"/>
    <property type="molecule type" value="Genomic_DNA"/>
</dbReference>
<dbReference type="RefSeq" id="WP_011243939.1">
    <property type="nucleotide sequence ID" value="NC_006576.1"/>
</dbReference>
<dbReference type="SMR" id="Q5N1K1"/>
<dbReference type="KEGG" id="syc:syc1629_c"/>
<dbReference type="eggNOG" id="COG0165">
    <property type="taxonomic scope" value="Bacteria"/>
</dbReference>
<dbReference type="UniPathway" id="UPA00068">
    <property type="reaction ID" value="UER00114"/>
</dbReference>
<dbReference type="Proteomes" id="UP000001175">
    <property type="component" value="Chromosome"/>
</dbReference>
<dbReference type="GO" id="GO:0005829">
    <property type="term" value="C:cytosol"/>
    <property type="evidence" value="ECO:0007669"/>
    <property type="project" value="TreeGrafter"/>
</dbReference>
<dbReference type="GO" id="GO:0004056">
    <property type="term" value="F:argininosuccinate lyase activity"/>
    <property type="evidence" value="ECO:0007669"/>
    <property type="project" value="UniProtKB-UniRule"/>
</dbReference>
<dbReference type="GO" id="GO:0042450">
    <property type="term" value="P:arginine biosynthetic process via ornithine"/>
    <property type="evidence" value="ECO:0007669"/>
    <property type="project" value="InterPro"/>
</dbReference>
<dbReference type="GO" id="GO:0006526">
    <property type="term" value="P:L-arginine biosynthetic process"/>
    <property type="evidence" value="ECO:0007669"/>
    <property type="project" value="UniProtKB-UniRule"/>
</dbReference>
<dbReference type="CDD" id="cd01359">
    <property type="entry name" value="Argininosuccinate_lyase"/>
    <property type="match status" value="1"/>
</dbReference>
<dbReference type="FunFam" id="1.10.275.10:FF:000002">
    <property type="entry name" value="Argininosuccinate lyase"/>
    <property type="match status" value="1"/>
</dbReference>
<dbReference type="FunFam" id="1.10.40.30:FF:000001">
    <property type="entry name" value="Argininosuccinate lyase"/>
    <property type="match status" value="1"/>
</dbReference>
<dbReference type="FunFam" id="1.20.200.10:FF:000015">
    <property type="entry name" value="argininosuccinate lyase isoform X2"/>
    <property type="match status" value="1"/>
</dbReference>
<dbReference type="Gene3D" id="1.10.40.30">
    <property type="entry name" value="Fumarase/aspartase (C-terminal domain)"/>
    <property type="match status" value="1"/>
</dbReference>
<dbReference type="Gene3D" id="1.20.200.10">
    <property type="entry name" value="Fumarase/aspartase (Central domain)"/>
    <property type="match status" value="1"/>
</dbReference>
<dbReference type="Gene3D" id="1.10.275.10">
    <property type="entry name" value="Fumarase/aspartase (N-terminal domain)"/>
    <property type="match status" value="1"/>
</dbReference>
<dbReference type="HAMAP" id="MF_00006">
    <property type="entry name" value="Arg_succ_lyase"/>
    <property type="match status" value="1"/>
</dbReference>
<dbReference type="InterPro" id="IPR029419">
    <property type="entry name" value="Arg_succ_lyase_C"/>
</dbReference>
<dbReference type="InterPro" id="IPR009049">
    <property type="entry name" value="Argininosuccinate_lyase"/>
</dbReference>
<dbReference type="InterPro" id="IPR024083">
    <property type="entry name" value="Fumarase/histidase_N"/>
</dbReference>
<dbReference type="InterPro" id="IPR000362">
    <property type="entry name" value="Fumarate_lyase_fam"/>
</dbReference>
<dbReference type="InterPro" id="IPR022761">
    <property type="entry name" value="Fumarate_lyase_N"/>
</dbReference>
<dbReference type="InterPro" id="IPR008948">
    <property type="entry name" value="L-Aspartase-like"/>
</dbReference>
<dbReference type="NCBIfam" id="TIGR00838">
    <property type="entry name" value="argH"/>
    <property type="match status" value="1"/>
</dbReference>
<dbReference type="PANTHER" id="PTHR43814">
    <property type="entry name" value="ARGININOSUCCINATE LYASE"/>
    <property type="match status" value="1"/>
</dbReference>
<dbReference type="PANTHER" id="PTHR43814:SF1">
    <property type="entry name" value="ARGININOSUCCINATE LYASE"/>
    <property type="match status" value="1"/>
</dbReference>
<dbReference type="Pfam" id="PF14698">
    <property type="entry name" value="ASL_C2"/>
    <property type="match status" value="1"/>
</dbReference>
<dbReference type="Pfam" id="PF00206">
    <property type="entry name" value="Lyase_1"/>
    <property type="match status" value="1"/>
</dbReference>
<dbReference type="PRINTS" id="PR00145">
    <property type="entry name" value="ARGSUCLYASE"/>
</dbReference>
<dbReference type="PRINTS" id="PR00149">
    <property type="entry name" value="FUMRATELYASE"/>
</dbReference>
<dbReference type="SUPFAM" id="SSF48557">
    <property type="entry name" value="L-aspartase-like"/>
    <property type="match status" value="1"/>
</dbReference>
<comment type="catalytic activity">
    <reaction evidence="1">
        <text>2-(N(omega)-L-arginino)succinate = fumarate + L-arginine</text>
        <dbReference type="Rhea" id="RHEA:24020"/>
        <dbReference type="ChEBI" id="CHEBI:29806"/>
        <dbReference type="ChEBI" id="CHEBI:32682"/>
        <dbReference type="ChEBI" id="CHEBI:57472"/>
        <dbReference type="EC" id="4.3.2.1"/>
    </reaction>
</comment>
<comment type="pathway">
    <text evidence="1">Amino-acid biosynthesis; L-arginine biosynthesis; L-arginine from L-ornithine and carbamoyl phosphate: step 3/3.</text>
</comment>
<comment type="subcellular location">
    <subcellularLocation>
        <location evidence="1">Cytoplasm</location>
    </subcellularLocation>
</comment>
<comment type="similarity">
    <text evidence="1">Belongs to the lyase 1 family. Argininosuccinate lyase subfamily.</text>
</comment>
<accession>Q5N1K1</accession>
<protein>
    <recommendedName>
        <fullName evidence="1">Argininosuccinate lyase</fullName>
        <shortName evidence="1">ASAL</shortName>
        <ecNumber evidence="1">4.3.2.1</ecNumber>
    </recommendedName>
    <alternativeName>
        <fullName evidence="1">Arginosuccinase</fullName>
    </alternativeName>
</protein>
<reference key="1">
    <citation type="journal article" date="2007" name="Photosyn. Res.">
        <title>Complete nucleotide sequence of the freshwater unicellular cyanobacterium Synechococcus elongatus PCC 6301 chromosome: gene content and organization.</title>
        <authorList>
            <person name="Sugita C."/>
            <person name="Ogata K."/>
            <person name="Shikata M."/>
            <person name="Jikuya H."/>
            <person name="Takano J."/>
            <person name="Furumichi M."/>
            <person name="Kanehisa M."/>
            <person name="Omata T."/>
            <person name="Sugiura M."/>
            <person name="Sugita M."/>
        </authorList>
    </citation>
    <scope>NUCLEOTIDE SEQUENCE [LARGE SCALE GENOMIC DNA]</scope>
    <source>
        <strain>ATCC 27144 / PCC 6301 / SAUG 1402/1</strain>
    </source>
</reference>
<gene>
    <name evidence="1" type="primary">argH</name>
    <name type="ordered locus">syc1629_c</name>
</gene>
<evidence type="ECO:0000255" key="1">
    <source>
        <dbReference type="HAMAP-Rule" id="MF_00006"/>
    </source>
</evidence>